<organism>
    <name type="scientific">Streptomyces showdoensis</name>
    <dbReference type="NCBI Taxonomy" id="68268"/>
    <lineage>
        <taxon>Bacteria</taxon>
        <taxon>Bacillati</taxon>
        <taxon>Actinomycetota</taxon>
        <taxon>Actinomycetes</taxon>
        <taxon>Kitasatosporales</taxon>
        <taxon>Streptomycetaceae</taxon>
        <taxon>Streptomyces</taxon>
    </lineage>
</organism>
<feature type="chain" id="PRO_0000461419" description="Drimenyl diphosphate synthase">
    <location>
        <begin position="1"/>
        <end position="533"/>
    </location>
</feature>
<feature type="repeat" description="PFTB 1" evidence="1">
    <location>
        <begin position="274"/>
        <end position="316"/>
    </location>
</feature>
<feature type="repeat" description="PFTB 2" evidence="1">
    <location>
        <begin position="324"/>
        <end position="366"/>
    </location>
</feature>
<feature type="repeat" description="PFTB 3" evidence="1">
    <location>
        <begin position="372"/>
        <end position="415"/>
    </location>
</feature>
<feature type="repeat" description="PFTB 4" evidence="1">
    <location>
        <begin position="425"/>
        <end position="466"/>
    </location>
</feature>
<feature type="repeat" description="PFTB 5" evidence="1">
    <location>
        <begin position="474"/>
        <end position="517"/>
    </location>
</feature>
<feature type="active site" description="Proton donor" evidence="5">
    <location>
        <position position="303"/>
    </location>
</feature>
<feature type="binding site" evidence="2 9 10">
    <location>
        <position position="132"/>
    </location>
    <ligand>
        <name>(2E,6E)-farnesyl diphosphate</name>
        <dbReference type="ChEBI" id="CHEBI:175763"/>
    </ligand>
</feature>
<feature type="binding site" evidence="2 9 10">
    <location>
        <position position="133"/>
    </location>
    <ligand>
        <name>(2E,6E)-farnesyl diphosphate</name>
        <dbReference type="ChEBI" id="CHEBI:175763"/>
    </ligand>
</feature>
<feature type="binding site" evidence="2 9 10">
    <location>
        <position position="163"/>
    </location>
    <ligand>
        <name>(2E,6E)-farnesyl diphosphate</name>
        <dbReference type="ChEBI" id="CHEBI:175763"/>
    </ligand>
</feature>
<feature type="binding site" evidence="2 9 10">
    <location>
        <position position="165"/>
    </location>
    <ligand>
        <name>(2E,6E)-farnesyl diphosphate</name>
        <dbReference type="ChEBI" id="CHEBI:175763"/>
    </ligand>
</feature>
<feature type="binding site" evidence="2 8 9 10 11">
    <location>
        <position position="169"/>
    </location>
    <ligand>
        <name>Mg(2+)</name>
        <dbReference type="ChEBI" id="CHEBI:18420"/>
        <label>1</label>
    </ligand>
</feature>
<feature type="binding site" evidence="2 8 9 10 11">
    <location>
        <position position="169"/>
    </location>
    <ligand>
        <name>Mg(2+)</name>
        <dbReference type="ChEBI" id="CHEBI:18420"/>
        <label>2</label>
    </ligand>
</feature>
<feature type="binding site" evidence="2 9 10">
    <location>
        <position position="501"/>
    </location>
    <ligand>
        <name>(2E,6E)-farnesyl diphosphate</name>
        <dbReference type="ChEBI" id="CHEBI:175763"/>
    </ligand>
</feature>
<feature type="mutagenesis site" description="Very high decrease in catalytic activity." evidence="2">
    <original>R</original>
    <variation>A</variation>
    <location>
        <position position="132"/>
    </location>
</feature>
<feature type="mutagenesis site" description="Very high decrease in catalytic activity." evidence="2">
    <original>K</original>
    <variation>A</variation>
    <location>
        <position position="133"/>
    </location>
</feature>
<feature type="mutagenesis site" description="Reduced activity to 60%." evidence="2">
    <original>Q</original>
    <variation>A</variation>
    <location>
        <position position="163"/>
    </location>
</feature>
<feature type="mutagenesis site" description="Reduced activity to 64%." evidence="2">
    <original>W</original>
    <variation>A</variation>
    <location>
        <position position="165"/>
    </location>
</feature>
<feature type="mutagenesis site" description="Loss of catalytic activity." evidence="2">
    <original>E</original>
    <variation>A</variation>
    <variation>D</variation>
    <location>
        <position position="169"/>
    </location>
</feature>
<feature type="mutagenesis site" description="Loss of catalytic activity." evidence="2">
    <original>D</original>
    <variation>A</variation>
    <location>
        <position position="303"/>
    </location>
</feature>
<feature type="mutagenesis site" description="Retains catalytic activity." evidence="2">
    <original>D</original>
    <variation>E</variation>
    <location>
        <position position="303"/>
    </location>
</feature>
<feature type="mutagenesis site" description="Decreased activity by 2-fold." evidence="2">
    <original>R</original>
    <variation>A</variation>
    <location>
        <position position="403"/>
    </location>
</feature>
<feature type="mutagenesis site" description="Very high decrease in catalytic activity." evidence="2">
    <original>R</original>
    <variation>A</variation>
    <location>
        <position position="501"/>
    </location>
</feature>
<feature type="mutagenesis site" description="High decrease in catalytic activity." evidence="2">
    <original>Y</original>
    <variation>F</variation>
    <location>
        <position position="505"/>
    </location>
</feature>
<feature type="helix" evidence="12">
    <location>
        <begin position="18"/>
        <end position="33"/>
    </location>
</feature>
<feature type="helix" evidence="12">
    <location>
        <begin position="48"/>
        <end position="60"/>
    </location>
</feature>
<feature type="helix" evidence="12">
    <location>
        <begin position="65"/>
        <end position="81"/>
    </location>
</feature>
<feature type="helix" evidence="12">
    <location>
        <begin position="86"/>
        <end position="96"/>
    </location>
</feature>
<feature type="helix" evidence="12">
    <location>
        <begin position="114"/>
        <end position="121"/>
    </location>
</feature>
<feature type="turn" evidence="12">
    <location>
        <begin position="122"/>
        <end position="124"/>
    </location>
</feature>
<feature type="helix" evidence="12">
    <location>
        <begin position="130"/>
        <end position="143"/>
    </location>
</feature>
<feature type="helix" evidence="12">
    <location>
        <begin position="154"/>
        <end position="157"/>
    </location>
</feature>
<feature type="helix" evidence="12">
    <location>
        <begin position="167"/>
        <end position="180"/>
    </location>
</feature>
<feature type="helix" evidence="12">
    <location>
        <begin position="184"/>
        <end position="186"/>
    </location>
</feature>
<feature type="helix" evidence="12">
    <location>
        <begin position="189"/>
        <end position="193"/>
    </location>
</feature>
<feature type="helix" evidence="12">
    <location>
        <begin position="194"/>
        <end position="199"/>
    </location>
</feature>
<feature type="strand" evidence="12">
    <location>
        <begin position="200"/>
        <end position="203"/>
    </location>
</feature>
<feature type="helix" evidence="12">
    <location>
        <begin position="205"/>
        <end position="207"/>
    </location>
</feature>
<feature type="helix" evidence="12">
    <location>
        <begin position="209"/>
        <end position="219"/>
    </location>
</feature>
<feature type="turn" evidence="12">
    <location>
        <begin position="223"/>
        <end position="225"/>
    </location>
</feature>
<feature type="helix" evidence="12">
    <location>
        <begin position="226"/>
        <end position="228"/>
    </location>
</feature>
<feature type="helix" evidence="12">
    <location>
        <begin position="229"/>
        <end position="238"/>
    </location>
</feature>
<feature type="strand" evidence="12">
    <location>
        <begin position="247"/>
        <end position="250"/>
    </location>
</feature>
<feature type="helix" evidence="12">
    <location>
        <begin position="253"/>
        <end position="265"/>
    </location>
</feature>
<feature type="strand" evidence="12">
    <location>
        <begin position="267"/>
        <end position="269"/>
    </location>
</feature>
<feature type="helix" evidence="12">
    <location>
        <begin position="274"/>
        <end position="282"/>
    </location>
</feature>
<feature type="helix" evidence="12">
    <location>
        <begin position="302"/>
        <end position="315"/>
    </location>
</feature>
<feature type="turn" evidence="12">
    <location>
        <begin position="317"/>
        <end position="320"/>
    </location>
</feature>
<feature type="helix" evidence="12">
    <location>
        <begin position="321"/>
        <end position="334"/>
    </location>
</feature>
<feature type="strand" evidence="12">
    <location>
        <begin position="343"/>
        <end position="345"/>
    </location>
</feature>
<feature type="helix" evidence="12">
    <location>
        <begin position="352"/>
        <end position="362"/>
    </location>
</feature>
<feature type="helix" evidence="12">
    <location>
        <begin position="366"/>
        <end position="368"/>
    </location>
</feature>
<feature type="helix" evidence="12">
    <location>
        <begin position="369"/>
        <end position="382"/>
    </location>
</feature>
<feature type="strand" evidence="12">
    <location>
        <begin position="392"/>
        <end position="397"/>
    </location>
</feature>
<feature type="helix" evidence="12">
    <location>
        <begin position="398"/>
        <end position="410"/>
    </location>
</feature>
<feature type="helix" evidence="12">
    <location>
        <begin position="415"/>
        <end position="435"/>
    </location>
</feature>
<feature type="helix" evidence="12">
    <location>
        <begin position="452"/>
        <end position="462"/>
    </location>
</feature>
<feature type="helix" evidence="12">
    <location>
        <begin position="473"/>
        <end position="484"/>
    </location>
</feature>
<feature type="strand" evidence="12">
    <location>
        <begin position="497"/>
        <end position="500"/>
    </location>
</feature>
<feature type="helix" evidence="12">
    <location>
        <begin position="510"/>
        <end position="522"/>
    </location>
</feature>
<accession>A0A2P2GK84</accession>
<sequence length="533" mass="56702">MNASPTPTATTTTEPATAVVRCRTRLARRVVAAVGPDGLLPAPCESRVLESALALALLTEERAEADATARLTAYLRTTLRTAPPDPFQCAVARAVLGGAGERGERVGDEGDMDAGTALDAGLDGFDHFTAGRKRLMFRTVLAALGATGFPAVPWEAYDTRPQQSWLHMEMKALKVLAAHGTGHPDVVRDEDWRALLPALEPGPAWECNNLAQLLALLALRHSPRHRPALGDVLKHVAGRLRPDGGMPFIDGMTVFTTAAAGLALSLLPAPPACVTPMADALALRRNPDGGYGFHSGVAQSDVDDTCYVLEFLRRAAPDRHRTAVAEAEGYLLALRNPDGGFPTFARGTSSEIAMTAAAASALAHDPDRREEVDEAVRYVVRHQRPDGTFERSWSRNATNAVFRAVLALTGVAAHGEERRSRARAAERALAHLAATQNGDGGWGHAEAEPSDPISTAYAVIALARGPRARPGGPLDRALAYLVERQHPDGGYRSRPDQAGPRPLLYDVPALADVFVLLALAHATATPDPEGCSR</sequence>
<dbReference type="EC" id="5.4.99.-" evidence="2"/>
<dbReference type="EMBL" id="LAQS01000032">
    <property type="protein sequence ID" value="KKZ71921.1"/>
    <property type="molecule type" value="Genomic_DNA"/>
</dbReference>
<dbReference type="RefSeq" id="WP_046909438.1">
    <property type="nucleotide sequence ID" value="NZ_BAAAXG010000012.1"/>
</dbReference>
<dbReference type="PDB" id="7XQ4">
    <property type="method" value="X-ray"/>
    <property type="resolution" value="1.58 A"/>
    <property type="chains" value="A=16-523"/>
</dbReference>
<dbReference type="PDB" id="7XQZ">
    <property type="method" value="X-ray"/>
    <property type="resolution" value="2.00 A"/>
    <property type="chains" value="A=16-523"/>
</dbReference>
<dbReference type="PDB" id="7XR7">
    <property type="method" value="X-ray"/>
    <property type="resolution" value="1.63 A"/>
    <property type="chains" value="A=16-523"/>
</dbReference>
<dbReference type="PDB" id="7XRA">
    <property type="method" value="X-ray"/>
    <property type="resolution" value="1.95 A"/>
    <property type="chains" value="A=16-523"/>
</dbReference>
<dbReference type="PDB" id="7XRU">
    <property type="method" value="X-ray"/>
    <property type="resolution" value="2.50 A"/>
    <property type="chains" value="A=16-523"/>
</dbReference>
<dbReference type="PDBsum" id="7XQ4"/>
<dbReference type="PDBsum" id="7XQZ"/>
<dbReference type="PDBsum" id="7XR7"/>
<dbReference type="PDBsum" id="7XRA"/>
<dbReference type="PDBsum" id="7XRU"/>
<dbReference type="SMR" id="A0A2P2GK84"/>
<dbReference type="OrthoDB" id="5484461at2"/>
<dbReference type="Proteomes" id="UP000265325">
    <property type="component" value="Unassembled WGS sequence"/>
</dbReference>
<dbReference type="GO" id="GO:0016853">
    <property type="term" value="F:isomerase activity"/>
    <property type="evidence" value="ECO:0007669"/>
    <property type="project" value="UniProtKB-KW"/>
</dbReference>
<dbReference type="GO" id="GO:0046872">
    <property type="term" value="F:metal ion binding"/>
    <property type="evidence" value="ECO:0007669"/>
    <property type="project" value="UniProtKB-KW"/>
</dbReference>
<dbReference type="CDD" id="cd00688">
    <property type="entry name" value="ISOPREN_C2_like"/>
    <property type="match status" value="1"/>
</dbReference>
<dbReference type="Gene3D" id="1.50.10.20">
    <property type="match status" value="1"/>
</dbReference>
<dbReference type="InterPro" id="IPR032696">
    <property type="entry name" value="SQ_cyclase_C"/>
</dbReference>
<dbReference type="InterPro" id="IPR008930">
    <property type="entry name" value="Terpenoid_cyclase/PrenylTrfase"/>
</dbReference>
<dbReference type="Pfam" id="PF13243">
    <property type="entry name" value="SQHop_cyclase_C"/>
    <property type="match status" value="1"/>
</dbReference>
<dbReference type="SUPFAM" id="SSF48239">
    <property type="entry name" value="Terpenoid cyclases/Protein prenyltransferases"/>
    <property type="match status" value="2"/>
</dbReference>
<reference key="1">
    <citation type="submission" date="2015-05" db="EMBL/GenBank/DDBJ databases">
        <title>Draft Genome assembly of Streptomyces showdoensis.</title>
        <authorList>
            <person name="Thapa K.K."/>
            <person name="Metsa-Ketela M."/>
        </authorList>
    </citation>
    <scope>NUCLEOTIDE SEQUENCE [LARGE SCALE GENOMIC DNA]</scope>
    <source>
        <strain>ATCC 15227 / C-224</strain>
    </source>
</reference>
<reference evidence="7 8 9 10 11" key="2">
    <citation type="journal article" date="2022" name="J. Am. Chem. Soc.">
        <title>Discovery, Structure, and Mechanism of a Class II Sesquiterpene Cyclase.</title>
        <authorList>
            <person name="Pan X."/>
            <person name="Du W."/>
            <person name="Zhang X."/>
            <person name="Lin X."/>
            <person name="Li F.R."/>
            <person name="Yang Q."/>
            <person name="Wang H."/>
            <person name="Rudolf J.D."/>
            <person name="Zhang B."/>
            <person name="Dong L.B."/>
        </authorList>
    </citation>
    <scope>X-RAY CRYSTALLOGRAPHY (1.58 ANGSTROMS) OF 16-523 OF WILD-TYPE AND MUTANTS ALA-303 AND GLU-303 IN COMPLEXES WITH MG(2+) AND FPP</scope>
    <scope>FUNCTION</scope>
    <scope>CATALYTIC ACTIVITY</scope>
    <scope>COFACTOR</scope>
    <scope>BIOPHYSICOCHEMICAL PROPERTIES</scope>
    <scope>REACTION MECHANISM</scope>
    <scope>ACTIVE SITE</scope>
    <scope>MUTAGENESIS OF ARG-132; LYS-133; GLN-163; TRP-165; GLU-169; ASP-303; ARG-403; ARG-501 AND TYR-505</scope>
    <source>
        <strain>ATCC 15227 / C-224</strain>
    </source>
</reference>
<proteinExistence type="evidence at protein level"/>
<name>DMS_STREW</name>
<protein>
    <recommendedName>
        <fullName evidence="3">Drimenyl diphosphate synthase</fullName>
        <shortName evidence="3">DMS</shortName>
        <ecNumber evidence="2">5.4.99.-</ecNumber>
    </recommendedName>
</protein>
<evidence type="ECO:0000255" key="1"/>
<evidence type="ECO:0000269" key="2">
    <source>
    </source>
</evidence>
<evidence type="ECO:0000303" key="3">
    <source>
    </source>
</evidence>
<evidence type="ECO:0000305" key="4"/>
<evidence type="ECO:0000305" key="5">
    <source>
    </source>
</evidence>
<evidence type="ECO:0000312" key="6">
    <source>
        <dbReference type="EMBL" id="KKZ71921.1"/>
    </source>
</evidence>
<evidence type="ECO:0007744" key="7">
    <source>
        <dbReference type="PDB" id="7XQ4"/>
    </source>
</evidence>
<evidence type="ECO:0007744" key="8">
    <source>
        <dbReference type="PDB" id="7XQZ"/>
    </source>
</evidence>
<evidence type="ECO:0007744" key="9">
    <source>
        <dbReference type="PDB" id="7XR7"/>
    </source>
</evidence>
<evidence type="ECO:0007744" key="10">
    <source>
        <dbReference type="PDB" id="7XRA"/>
    </source>
</evidence>
<evidence type="ECO:0007744" key="11">
    <source>
        <dbReference type="PDB" id="7XRU"/>
    </source>
</evidence>
<evidence type="ECO:0007829" key="12">
    <source>
        <dbReference type="PDB" id="7XQ4"/>
    </source>
</evidence>
<keyword id="KW-0002">3D-structure</keyword>
<keyword id="KW-0413">Isomerase</keyword>
<keyword id="KW-0460">Magnesium</keyword>
<keyword id="KW-0479">Metal-binding</keyword>
<keyword id="KW-1185">Reference proteome</keyword>
<keyword id="KW-0677">Repeat</keyword>
<comment type="function">
    <text evidence="2">Catalyzes the cyclization of farnesyl diphosphate (FPP) to drimenyl diphosphate. Cannot use geranylgeranyl diphosphate (GGPP) as substrate.</text>
</comment>
<comment type="catalytic activity">
    <reaction evidence="2">
        <text>(2E,6E)-farnesyl diphosphate = (5S,9S,10S)-drim-7-en-11-yl diphosphate</text>
        <dbReference type="Rhea" id="RHEA:81103"/>
        <dbReference type="ChEBI" id="CHEBI:149665"/>
        <dbReference type="ChEBI" id="CHEBI:175763"/>
    </reaction>
    <physiologicalReaction direction="left-to-right" evidence="5">
        <dbReference type="Rhea" id="RHEA:81104"/>
    </physiologicalReaction>
</comment>
<comment type="cofactor">
    <cofactor evidence="2">
        <name>Mg(2+)</name>
        <dbReference type="ChEBI" id="CHEBI:18420"/>
    </cofactor>
    <cofactor evidence="2">
        <name>Ni(2+)</name>
        <dbReference type="ChEBI" id="CHEBI:49786"/>
    </cofactor>
    <cofactor evidence="2">
        <name>Co(2+)</name>
        <dbReference type="ChEBI" id="CHEBI:48828"/>
    </cofactor>
    <text evidence="2">Requires a divalent metal cation for activity. The highest activity is observed in the presence of Mg(2+), but the enzyme can also use Ni(2+) and Co(2+) in vitro, while is inactive with Mn(2+) and Zn(2+). Binds a binuclear Mg(2+) cluster coordinated with Glu-169 and the diphosphate moiety of FPP.</text>
</comment>
<comment type="biophysicochemical properties">
    <kinetics>
        <KM evidence="2">40.9 uM for FPP</KM>
        <text evidence="2">kcat is 0.29 sec(-1).</text>
    </kinetics>
</comment>
<comment type="similarity">
    <text evidence="4">Belongs to the terpene cyclase/mutase family.</text>
</comment>
<gene>
    <name evidence="6" type="ORF">VO63_21045</name>
</gene>